<gene>
    <name evidence="1" type="primary">hslO</name>
    <name type="ordered locus">TTE1737</name>
</gene>
<dbReference type="EMBL" id="AE008691">
    <property type="protein sequence ID" value="AAM24931.1"/>
    <property type="molecule type" value="Genomic_DNA"/>
</dbReference>
<dbReference type="RefSeq" id="WP_011025934.1">
    <property type="nucleotide sequence ID" value="NC_003869.1"/>
</dbReference>
<dbReference type="SMR" id="Q8R986"/>
<dbReference type="STRING" id="273068.TTE1737"/>
<dbReference type="KEGG" id="tte:TTE1737"/>
<dbReference type="eggNOG" id="COG1281">
    <property type="taxonomic scope" value="Bacteria"/>
</dbReference>
<dbReference type="HOGENOM" id="CLU_054493_1_0_9"/>
<dbReference type="OrthoDB" id="9776534at2"/>
<dbReference type="Proteomes" id="UP000000555">
    <property type="component" value="Chromosome"/>
</dbReference>
<dbReference type="GO" id="GO:0005737">
    <property type="term" value="C:cytoplasm"/>
    <property type="evidence" value="ECO:0007669"/>
    <property type="project" value="UniProtKB-SubCell"/>
</dbReference>
<dbReference type="GO" id="GO:0044183">
    <property type="term" value="F:protein folding chaperone"/>
    <property type="evidence" value="ECO:0007669"/>
    <property type="project" value="TreeGrafter"/>
</dbReference>
<dbReference type="GO" id="GO:0051082">
    <property type="term" value="F:unfolded protein binding"/>
    <property type="evidence" value="ECO:0007669"/>
    <property type="project" value="UniProtKB-UniRule"/>
</dbReference>
<dbReference type="GO" id="GO:0042026">
    <property type="term" value="P:protein refolding"/>
    <property type="evidence" value="ECO:0007669"/>
    <property type="project" value="TreeGrafter"/>
</dbReference>
<dbReference type="CDD" id="cd00498">
    <property type="entry name" value="Hsp33"/>
    <property type="match status" value="1"/>
</dbReference>
<dbReference type="Gene3D" id="3.55.30.10">
    <property type="entry name" value="Hsp33 domain"/>
    <property type="match status" value="1"/>
</dbReference>
<dbReference type="Gene3D" id="3.90.1280.10">
    <property type="entry name" value="HSP33 redox switch-like"/>
    <property type="match status" value="1"/>
</dbReference>
<dbReference type="HAMAP" id="MF_00117">
    <property type="entry name" value="HslO"/>
    <property type="match status" value="1"/>
</dbReference>
<dbReference type="InterPro" id="IPR000397">
    <property type="entry name" value="Heat_shock_Hsp33"/>
</dbReference>
<dbReference type="InterPro" id="IPR016154">
    <property type="entry name" value="Heat_shock_Hsp33_C"/>
</dbReference>
<dbReference type="InterPro" id="IPR016153">
    <property type="entry name" value="Heat_shock_Hsp33_N"/>
</dbReference>
<dbReference type="NCBIfam" id="NF001033">
    <property type="entry name" value="PRK00114.1"/>
    <property type="match status" value="1"/>
</dbReference>
<dbReference type="PANTHER" id="PTHR30111">
    <property type="entry name" value="33 KDA CHAPERONIN"/>
    <property type="match status" value="1"/>
</dbReference>
<dbReference type="PANTHER" id="PTHR30111:SF1">
    <property type="entry name" value="33 KDA CHAPERONIN"/>
    <property type="match status" value="1"/>
</dbReference>
<dbReference type="Pfam" id="PF01430">
    <property type="entry name" value="HSP33"/>
    <property type="match status" value="1"/>
</dbReference>
<dbReference type="PIRSF" id="PIRSF005261">
    <property type="entry name" value="Heat_shock_Hsp33"/>
    <property type="match status" value="1"/>
</dbReference>
<dbReference type="SUPFAM" id="SSF64397">
    <property type="entry name" value="Hsp33 domain"/>
    <property type="match status" value="1"/>
</dbReference>
<dbReference type="SUPFAM" id="SSF118352">
    <property type="entry name" value="HSP33 redox switch-like"/>
    <property type="match status" value="1"/>
</dbReference>
<reference key="1">
    <citation type="journal article" date="2002" name="Genome Res.">
        <title>A complete sequence of the T. tengcongensis genome.</title>
        <authorList>
            <person name="Bao Q."/>
            <person name="Tian Y."/>
            <person name="Li W."/>
            <person name="Xu Z."/>
            <person name="Xuan Z."/>
            <person name="Hu S."/>
            <person name="Dong W."/>
            <person name="Yang J."/>
            <person name="Chen Y."/>
            <person name="Xue Y."/>
            <person name="Xu Y."/>
            <person name="Lai X."/>
            <person name="Huang L."/>
            <person name="Dong X."/>
            <person name="Ma Y."/>
            <person name="Ling L."/>
            <person name="Tan H."/>
            <person name="Chen R."/>
            <person name="Wang J."/>
            <person name="Yu J."/>
            <person name="Yang H."/>
        </authorList>
    </citation>
    <scope>NUCLEOTIDE SEQUENCE [LARGE SCALE GENOMIC DNA]</scope>
    <source>
        <strain>DSM 15242 / JCM 11007 / NBRC 100824 / MB4</strain>
    </source>
</reference>
<evidence type="ECO:0000255" key="1">
    <source>
        <dbReference type="HAMAP-Rule" id="MF_00117"/>
    </source>
</evidence>
<protein>
    <recommendedName>
        <fullName evidence="1">33 kDa chaperonin</fullName>
    </recommendedName>
    <alternativeName>
        <fullName evidence="1">Heat shock protein 33 homolog</fullName>
        <shortName evidence="1">HSP33</shortName>
    </alternativeName>
</protein>
<comment type="function">
    <text evidence="1">Redox regulated molecular chaperone. Protects both thermally unfolding and oxidatively damaged proteins from irreversible aggregation. Plays an important role in the bacterial defense system toward oxidative stress.</text>
</comment>
<comment type="subcellular location">
    <subcellularLocation>
        <location evidence="1">Cytoplasm</location>
    </subcellularLocation>
</comment>
<comment type="PTM">
    <text evidence="1">Under oxidizing conditions two disulfide bonds are formed involving the reactive cysteines. Under reducing conditions zinc is bound to the reactive cysteines and the protein is inactive.</text>
</comment>
<comment type="similarity">
    <text evidence="1">Belongs to the HSP33 family.</text>
</comment>
<proteinExistence type="inferred from homology"/>
<keyword id="KW-0143">Chaperone</keyword>
<keyword id="KW-0963">Cytoplasm</keyword>
<keyword id="KW-1015">Disulfide bond</keyword>
<keyword id="KW-0676">Redox-active center</keyword>
<keyword id="KW-1185">Reference proteome</keyword>
<keyword id="KW-0862">Zinc</keyword>
<feature type="chain" id="PRO_0000192221" description="33 kDa chaperonin">
    <location>
        <begin position="1"/>
        <end position="294"/>
    </location>
</feature>
<feature type="disulfide bond" description="Redox-active" evidence="1">
    <location>
        <begin position="238"/>
        <end position="240"/>
    </location>
</feature>
<feature type="disulfide bond" description="Redox-active" evidence="1">
    <location>
        <begin position="271"/>
        <end position="274"/>
    </location>
</feature>
<sequence>MGDYIVKATAYEDNVLAFAALSKDTVNRAKEIHSLTPTACAALGRSLTAVAMMRTMMKGEKDKVTLVIKGDGPIGSIVVVSNFPGIVKGYVGNPFVDLPLSEKGKLDVGRAVGKKGYVTVIKDIGLKEPYIGTVEIQTGEIGDDIAYYFYTSEQIPSAVGLGVLVGKEGDVLTAGGFILQLLPDVKEEVILKLEKAIGQITSVTDLLRQGKTPEDILTSIFEEEEVKFLEKIPLKYECDCSQERFESAILALGKEEIQKLIKEEQGIETVCHFCGKKYFITRERLEELLKEAEN</sequence>
<accession>Q8R986</accession>
<organism>
    <name type="scientific">Caldanaerobacter subterraneus subsp. tengcongensis (strain DSM 15242 / JCM 11007 / NBRC 100824 / MB4)</name>
    <name type="common">Thermoanaerobacter tengcongensis</name>
    <dbReference type="NCBI Taxonomy" id="273068"/>
    <lineage>
        <taxon>Bacteria</taxon>
        <taxon>Bacillati</taxon>
        <taxon>Bacillota</taxon>
        <taxon>Clostridia</taxon>
        <taxon>Thermoanaerobacterales</taxon>
        <taxon>Thermoanaerobacteraceae</taxon>
        <taxon>Caldanaerobacter</taxon>
    </lineage>
</organism>
<name>HSLO_CALS4</name>